<proteinExistence type="inferred from homology"/>
<organism>
    <name type="scientific">Haemophilus influenzae (strain ATCC 51907 / DSM 11121 / KW20 / Rd)</name>
    <dbReference type="NCBI Taxonomy" id="71421"/>
    <lineage>
        <taxon>Bacteria</taxon>
        <taxon>Pseudomonadati</taxon>
        <taxon>Pseudomonadota</taxon>
        <taxon>Gammaproteobacteria</taxon>
        <taxon>Pasteurellales</taxon>
        <taxon>Pasteurellaceae</taxon>
        <taxon>Haemophilus</taxon>
    </lineage>
</organism>
<name>HIS7_HAEIN</name>
<reference key="1">
    <citation type="journal article" date="1995" name="Science">
        <title>Whole-genome random sequencing and assembly of Haemophilus influenzae Rd.</title>
        <authorList>
            <person name="Fleischmann R.D."/>
            <person name="Adams M.D."/>
            <person name="White O."/>
            <person name="Clayton R.A."/>
            <person name="Kirkness E.F."/>
            <person name="Kerlavage A.R."/>
            <person name="Bult C.J."/>
            <person name="Tomb J.-F."/>
            <person name="Dougherty B.A."/>
            <person name="Merrick J.M."/>
            <person name="McKenney K."/>
            <person name="Sutton G.G."/>
            <person name="FitzHugh W."/>
            <person name="Fields C.A."/>
            <person name="Gocayne J.D."/>
            <person name="Scott J.D."/>
            <person name="Shirley R."/>
            <person name="Liu L.-I."/>
            <person name="Glodek A."/>
            <person name="Kelley J.M."/>
            <person name="Weidman J.F."/>
            <person name="Phillips C.A."/>
            <person name="Spriggs T."/>
            <person name="Hedblom E."/>
            <person name="Cotton M.D."/>
            <person name="Utterback T.R."/>
            <person name="Hanna M.C."/>
            <person name="Nguyen D.T."/>
            <person name="Saudek D.M."/>
            <person name="Brandon R.C."/>
            <person name="Fine L.D."/>
            <person name="Fritchman J.L."/>
            <person name="Fuhrmann J.L."/>
            <person name="Geoghagen N.S.M."/>
            <person name="Gnehm C.L."/>
            <person name="McDonald L.A."/>
            <person name="Small K.V."/>
            <person name="Fraser C.M."/>
            <person name="Smith H.O."/>
            <person name="Venter J.C."/>
        </authorList>
    </citation>
    <scope>NUCLEOTIDE SEQUENCE [LARGE SCALE GENOMIC DNA]</scope>
    <source>
        <strain>ATCC 51907 / DSM 11121 / KW20 / Rd</strain>
    </source>
</reference>
<accession>P44327</accession>
<comment type="catalytic activity">
    <reaction evidence="1">
        <text>D-erythro-1-(imidazol-4-yl)glycerol 3-phosphate = 3-(imidazol-4-yl)-2-oxopropyl phosphate + H2O</text>
        <dbReference type="Rhea" id="RHEA:11040"/>
        <dbReference type="ChEBI" id="CHEBI:15377"/>
        <dbReference type="ChEBI" id="CHEBI:57766"/>
        <dbReference type="ChEBI" id="CHEBI:58278"/>
        <dbReference type="EC" id="4.2.1.19"/>
    </reaction>
</comment>
<comment type="catalytic activity">
    <reaction evidence="1">
        <text>L-histidinol phosphate + H2O = L-histidinol + phosphate</text>
        <dbReference type="Rhea" id="RHEA:14465"/>
        <dbReference type="ChEBI" id="CHEBI:15377"/>
        <dbReference type="ChEBI" id="CHEBI:43474"/>
        <dbReference type="ChEBI" id="CHEBI:57699"/>
        <dbReference type="ChEBI" id="CHEBI:57980"/>
        <dbReference type="EC" id="3.1.3.15"/>
    </reaction>
</comment>
<comment type="cofactor">
    <cofactor evidence="1">
        <name>Mg(2+)</name>
        <dbReference type="ChEBI" id="CHEBI:18420"/>
    </cofactor>
</comment>
<comment type="cofactor">
    <cofactor evidence="1">
        <name>Zn(2+)</name>
        <dbReference type="ChEBI" id="CHEBI:29105"/>
    </cofactor>
</comment>
<comment type="pathway">
    <text evidence="1">Amino-acid biosynthesis; L-histidine biosynthesis; L-histidine from 5-phospho-alpha-D-ribose 1-diphosphate: step 6/9.</text>
</comment>
<comment type="pathway">
    <text evidence="1">Amino-acid biosynthesis; L-histidine biosynthesis; L-histidine from 5-phospho-alpha-D-ribose 1-diphosphate: step 8/9.</text>
</comment>
<comment type="subcellular location">
    <subcellularLocation>
        <location evidence="1">Cytoplasm</location>
    </subcellularLocation>
</comment>
<comment type="similarity">
    <text evidence="1">In the N-terminal section; belongs to the histidinol-phosphatase family.</text>
</comment>
<comment type="similarity">
    <text evidence="1">In the C-terminal section; belongs to the imidazoleglycerol-phosphate dehydratase family.</text>
</comment>
<keyword id="KW-0028">Amino-acid biosynthesis</keyword>
<keyword id="KW-0963">Cytoplasm</keyword>
<keyword id="KW-0368">Histidine biosynthesis</keyword>
<keyword id="KW-0378">Hydrolase</keyword>
<keyword id="KW-0456">Lyase</keyword>
<keyword id="KW-0460">Magnesium</keyword>
<keyword id="KW-0479">Metal-binding</keyword>
<keyword id="KW-0511">Multifunctional enzyme</keyword>
<keyword id="KW-1185">Reference proteome</keyword>
<keyword id="KW-0862">Zinc</keyword>
<sequence>MQPTLFIDRDGTLIDEPKTDFQIDSLEKLKLEPKVIPALLRLKAKYRFVIVSNQDGLGTDAFPQTDFDKPHNVMMALFESQGITFDEVLICPHKPEENCLCRKPKIKLLDHYIRKNLFDIDRSFVIGDRETDVQLAENLGIRAIQYDPQKMNWDLIAEKLLGETVTNCGKRPPRFAEVIRQTKETDIKVQVWLDEAGVNEIKTGVGFFDHMLDQIATHGGFRMNVQCKGDLWIDEHHTVEDTALALGQALKQAVGDKRGIARFGFVLPMDECKAECALDLSGRPWIKFNACFKRDKVGDFSTELTEHFFQSLAFSMLATLHLNVTGNNDHHKIESLFKAFGRTLRQAIRIEGNEMPSSKGVL</sequence>
<feature type="chain" id="PRO_0000158210" description="Histidine biosynthesis bifunctional protein HisB">
    <location>
        <begin position="1"/>
        <end position="362"/>
    </location>
</feature>
<feature type="region of interest" description="Histidinol-phosphatase" evidence="1">
    <location>
        <begin position="1"/>
        <end position="173"/>
    </location>
</feature>
<feature type="region of interest" description="Imidazoleglycerol-phosphate dehydratase" evidence="1">
    <location>
        <begin position="174"/>
        <end position="362"/>
    </location>
</feature>
<feature type="active site" description="Nucleophile" evidence="1">
    <location>
        <position position="8"/>
    </location>
</feature>
<feature type="active site" description="Proton donor" evidence="1">
    <location>
        <position position="10"/>
    </location>
</feature>
<feature type="binding site" evidence="1">
    <location>
        <position position="8"/>
    </location>
    <ligand>
        <name>Mg(2+)</name>
        <dbReference type="ChEBI" id="CHEBI:18420"/>
    </ligand>
</feature>
<feature type="binding site" evidence="1">
    <location>
        <position position="10"/>
    </location>
    <ligand>
        <name>Mg(2+)</name>
        <dbReference type="ChEBI" id="CHEBI:18420"/>
    </ligand>
</feature>
<feature type="binding site" evidence="1">
    <location>
        <position position="91"/>
    </location>
    <ligand>
        <name>Zn(2+)</name>
        <dbReference type="ChEBI" id="CHEBI:29105"/>
    </ligand>
</feature>
<feature type="binding site" evidence="1">
    <location>
        <position position="93"/>
    </location>
    <ligand>
        <name>Zn(2+)</name>
        <dbReference type="ChEBI" id="CHEBI:29105"/>
    </ligand>
</feature>
<feature type="binding site" evidence="1">
    <location>
        <position position="99"/>
    </location>
    <ligand>
        <name>Zn(2+)</name>
        <dbReference type="ChEBI" id="CHEBI:29105"/>
    </ligand>
</feature>
<feature type="binding site" evidence="1">
    <location>
        <position position="101"/>
    </location>
    <ligand>
        <name>Zn(2+)</name>
        <dbReference type="ChEBI" id="CHEBI:29105"/>
    </ligand>
</feature>
<feature type="binding site" evidence="1">
    <location>
        <position position="128"/>
    </location>
    <ligand>
        <name>Mg(2+)</name>
        <dbReference type="ChEBI" id="CHEBI:18420"/>
    </ligand>
</feature>
<protein>
    <recommendedName>
        <fullName evidence="1">Histidine biosynthesis bifunctional protein HisB</fullName>
    </recommendedName>
    <domain>
        <recommendedName>
            <fullName evidence="1">Histidinol-phosphatase</fullName>
            <ecNumber evidence="1">3.1.3.15</ecNumber>
        </recommendedName>
    </domain>
    <domain>
        <recommendedName>
            <fullName evidence="1">Imidazoleglycerol-phosphate dehydratase</fullName>
            <shortName evidence="1">IGPD</shortName>
            <ecNumber evidence="1">4.2.1.19</ecNumber>
        </recommendedName>
    </domain>
</protein>
<dbReference type="EC" id="3.1.3.15" evidence="1"/>
<dbReference type="EC" id="4.2.1.19" evidence="1"/>
<dbReference type="EMBL" id="L42023">
    <property type="protein sequence ID" value="AAC22130.1"/>
    <property type="molecule type" value="Genomic_DNA"/>
</dbReference>
<dbReference type="PIR" id="F64070">
    <property type="entry name" value="F64070"/>
</dbReference>
<dbReference type="RefSeq" id="NP_438632.1">
    <property type="nucleotide sequence ID" value="NC_000907.1"/>
</dbReference>
<dbReference type="SMR" id="P44327"/>
<dbReference type="STRING" id="71421.HI_0471"/>
<dbReference type="EnsemblBacteria" id="AAC22130">
    <property type="protein sequence ID" value="AAC22130"/>
    <property type="gene ID" value="HI_0471"/>
</dbReference>
<dbReference type="KEGG" id="hin:HI_0471"/>
<dbReference type="PATRIC" id="fig|71421.8.peg.491"/>
<dbReference type="eggNOG" id="COG0131">
    <property type="taxonomic scope" value="Bacteria"/>
</dbReference>
<dbReference type="eggNOG" id="COG0241">
    <property type="taxonomic scope" value="Bacteria"/>
</dbReference>
<dbReference type="HOGENOM" id="CLU_044308_0_0_6"/>
<dbReference type="OrthoDB" id="9790411at2"/>
<dbReference type="PhylomeDB" id="P44327"/>
<dbReference type="BioCyc" id="HINF71421:G1GJ1-487-MONOMER"/>
<dbReference type="UniPathway" id="UPA00031">
    <property type="reaction ID" value="UER00011"/>
</dbReference>
<dbReference type="UniPathway" id="UPA00031">
    <property type="reaction ID" value="UER00013"/>
</dbReference>
<dbReference type="Proteomes" id="UP000000579">
    <property type="component" value="Chromosome"/>
</dbReference>
<dbReference type="GO" id="GO:0005737">
    <property type="term" value="C:cytoplasm"/>
    <property type="evidence" value="ECO:0007669"/>
    <property type="project" value="UniProtKB-SubCell"/>
</dbReference>
<dbReference type="GO" id="GO:0004401">
    <property type="term" value="F:histidinol-phosphatase activity"/>
    <property type="evidence" value="ECO:0007669"/>
    <property type="project" value="UniProtKB-UniRule"/>
</dbReference>
<dbReference type="GO" id="GO:0004424">
    <property type="term" value="F:imidazoleglycerol-phosphate dehydratase activity"/>
    <property type="evidence" value="ECO:0000318"/>
    <property type="project" value="GO_Central"/>
</dbReference>
<dbReference type="GO" id="GO:0046872">
    <property type="term" value="F:metal ion binding"/>
    <property type="evidence" value="ECO:0007669"/>
    <property type="project" value="UniProtKB-KW"/>
</dbReference>
<dbReference type="GO" id="GO:0000105">
    <property type="term" value="P:L-histidine biosynthetic process"/>
    <property type="evidence" value="ECO:0000318"/>
    <property type="project" value="GO_Central"/>
</dbReference>
<dbReference type="CDD" id="cd07503">
    <property type="entry name" value="HAD_HisB-N"/>
    <property type="match status" value="1"/>
</dbReference>
<dbReference type="CDD" id="cd07914">
    <property type="entry name" value="IGPD"/>
    <property type="match status" value="1"/>
</dbReference>
<dbReference type="FunFam" id="3.40.50.1000:FF:000061">
    <property type="entry name" value="Histidine biosynthesis bifunctional protein HisB"/>
    <property type="match status" value="1"/>
</dbReference>
<dbReference type="FunFam" id="3.30.230.40:FF:000001">
    <property type="entry name" value="Imidazoleglycerol-phosphate dehydratase HisB"/>
    <property type="match status" value="1"/>
</dbReference>
<dbReference type="FunFam" id="3.30.230.40:FF:000003">
    <property type="entry name" value="Imidazoleglycerol-phosphate dehydratase HisB"/>
    <property type="match status" value="1"/>
</dbReference>
<dbReference type="Gene3D" id="3.40.50.1000">
    <property type="entry name" value="HAD superfamily/HAD-like"/>
    <property type="match status" value="1"/>
</dbReference>
<dbReference type="Gene3D" id="3.30.230.40">
    <property type="entry name" value="Imidazole glycerol phosphate dehydratase, domain 1"/>
    <property type="match status" value="2"/>
</dbReference>
<dbReference type="HAMAP" id="MF_01022">
    <property type="entry name" value="Bifunc_HisB"/>
    <property type="match status" value="1"/>
</dbReference>
<dbReference type="HAMAP" id="MF_00076">
    <property type="entry name" value="HisB"/>
    <property type="match status" value="1"/>
</dbReference>
<dbReference type="InterPro" id="IPR036412">
    <property type="entry name" value="HAD-like_sf"/>
</dbReference>
<dbReference type="InterPro" id="IPR006549">
    <property type="entry name" value="HAD-SF_hydro_IIIA"/>
</dbReference>
<dbReference type="InterPro" id="IPR023214">
    <property type="entry name" value="HAD_sf"/>
</dbReference>
<dbReference type="InterPro" id="IPR020566">
    <property type="entry name" value="His_synth_bifunc_HisB"/>
</dbReference>
<dbReference type="InterPro" id="IPR005954">
    <property type="entry name" value="HisB_N"/>
</dbReference>
<dbReference type="InterPro" id="IPR006543">
    <property type="entry name" value="Histidinol-phos"/>
</dbReference>
<dbReference type="InterPro" id="IPR038494">
    <property type="entry name" value="IGPD_sf"/>
</dbReference>
<dbReference type="InterPro" id="IPR000807">
    <property type="entry name" value="ImidazoleglycerolP_deHydtase"/>
</dbReference>
<dbReference type="InterPro" id="IPR020565">
    <property type="entry name" value="ImidazoleglycerP_deHydtase_CS"/>
</dbReference>
<dbReference type="InterPro" id="IPR020568">
    <property type="entry name" value="Ribosomal_Su5_D2-typ_SF"/>
</dbReference>
<dbReference type="NCBIfam" id="TIGR01662">
    <property type="entry name" value="HAD-SF-IIIA"/>
    <property type="match status" value="1"/>
</dbReference>
<dbReference type="NCBIfam" id="TIGR01261">
    <property type="entry name" value="hisB_Nterm"/>
    <property type="match status" value="1"/>
</dbReference>
<dbReference type="NCBIfam" id="TIGR01656">
    <property type="entry name" value="Histidinol-ppas"/>
    <property type="match status" value="1"/>
</dbReference>
<dbReference type="NCBIfam" id="NF002111">
    <property type="entry name" value="PRK00951.2-1"/>
    <property type="match status" value="1"/>
</dbReference>
<dbReference type="NCBIfam" id="NF002114">
    <property type="entry name" value="PRK00951.2-4"/>
    <property type="match status" value="1"/>
</dbReference>
<dbReference type="NCBIfam" id="NF003937">
    <property type="entry name" value="PRK05446.1"/>
    <property type="match status" value="1"/>
</dbReference>
<dbReference type="PANTHER" id="PTHR23133:SF2">
    <property type="entry name" value="IMIDAZOLEGLYCEROL-PHOSPHATE DEHYDRATASE"/>
    <property type="match status" value="1"/>
</dbReference>
<dbReference type="PANTHER" id="PTHR23133">
    <property type="entry name" value="IMIDAZOLEGLYCEROL-PHOSPHATE DEHYDRATASE HIS7"/>
    <property type="match status" value="1"/>
</dbReference>
<dbReference type="Pfam" id="PF13242">
    <property type="entry name" value="Hydrolase_like"/>
    <property type="match status" value="1"/>
</dbReference>
<dbReference type="Pfam" id="PF00475">
    <property type="entry name" value="IGPD"/>
    <property type="match status" value="1"/>
</dbReference>
<dbReference type="SUPFAM" id="SSF56784">
    <property type="entry name" value="HAD-like"/>
    <property type="match status" value="1"/>
</dbReference>
<dbReference type="SUPFAM" id="SSF54211">
    <property type="entry name" value="Ribosomal protein S5 domain 2-like"/>
    <property type="match status" value="2"/>
</dbReference>
<dbReference type="PROSITE" id="PS00954">
    <property type="entry name" value="IGP_DEHYDRATASE_1"/>
    <property type="match status" value="1"/>
</dbReference>
<dbReference type="PROSITE" id="PS00955">
    <property type="entry name" value="IGP_DEHYDRATASE_2"/>
    <property type="match status" value="1"/>
</dbReference>
<gene>
    <name evidence="1" type="primary">hisB</name>
    <name type="ordered locus">HI_0471</name>
</gene>
<evidence type="ECO:0000255" key="1">
    <source>
        <dbReference type="HAMAP-Rule" id="MF_01022"/>
    </source>
</evidence>